<gene>
    <name evidence="2" type="primary">tuf1</name>
    <name type="ordered locus">SG0127</name>
</gene>
<gene>
    <name evidence="2" type="primary">tuf2</name>
    <name type="ordered locus">SG2283</name>
</gene>
<dbReference type="EC" id="3.6.5.3" evidence="2"/>
<dbReference type="EMBL" id="AP008232">
    <property type="protein sequence ID" value="BAE73402.1"/>
    <property type="molecule type" value="Genomic_DNA"/>
</dbReference>
<dbReference type="EMBL" id="AP008232">
    <property type="protein sequence ID" value="BAE75558.1"/>
    <property type="molecule type" value="Genomic_DNA"/>
</dbReference>
<dbReference type="RefSeq" id="WP_011409992.1">
    <property type="nucleotide sequence ID" value="NC_007712.1"/>
</dbReference>
<dbReference type="SMR" id="Q2NQL7"/>
<dbReference type="STRING" id="343509.SG0127"/>
<dbReference type="KEGG" id="sgl:SG0127"/>
<dbReference type="KEGG" id="sgl:SG2283"/>
<dbReference type="eggNOG" id="COG0050">
    <property type="taxonomic scope" value="Bacteria"/>
</dbReference>
<dbReference type="HOGENOM" id="CLU_007265_0_0_6"/>
<dbReference type="OrthoDB" id="9803139at2"/>
<dbReference type="BioCyc" id="SGLO343509:SGP1_RS01090-MONOMER"/>
<dbReference type="BioCyc" id="SGLO343509:SGP1_RS20870-MONOMER"/>
<dbReference type="Proteomes" id="UP000001932">
    <property type="component" value="Chromosome"/>
</dbReference>
<dbReference type="GO" id="GO:0005829">
    <property type="term" value="C:cytosol"/>
    <property type="evidence" value="ECO:0007669"/>
    <property type="project" value="TreeGrafter"/>
</dbReference>
<dbReference type="GO" id="GO:0005525">
    <property type="term" value="F:GTP binding"/>
    <property type="evidence" value="ECO:0007669"/>
    <property type="project" value="UniProtKB-UniRule"/>
</dbReference>
<dbReference type="GO" id="GO:0003924">
    <property type="term" value="F:GTPase activity"/>
    <property type="evidence" value="ECO:0007669"/>
    <property type="project" value="InterPro"/>
</dbReference>
<dbReference type="GO" id="GO:0097216">
    <property type="term" value="F:guanosine tetraphosphate binding"/>
    <property type="evidence" value="ECO:0007669"/>
    <property type="project" value="UniProtKB-ARBA"/>
</dbReference>
<dbReference type="GO" id="GO:0003746">
    <property type="term" value="F:translation elongation factor activity"/>
    <property type="evidence" value="ECO:0007669"/>
    <property type="project" value="UniProtKB-UniRule"/>
</dbReference>
<dbReference type="CDD" id="cd01884">
    <property type="entry name" value="EF_Tu"/>
    <property type="match status" value="1"/>
</dbReference>
<dbReference type="CDD" id="cd03697">
    <property type="entry name" value="EFTU_II"/>
    <property type="match status" value="1"/>
</dbReference>
<dbReference type="CDD" id="cd03707">
    <property type="entry name" value="EFTU_III"/>
    <property type="match status" value="1"/>
</dbReference>
<dbReference type="FunFam" id="2.40.30.10:FF:000001">
    <property type="entry name" value="Elongation factor Tu"/>
    <property type="match status" value="1"/>
</dbReference>
<dbReference type="FunFam" id="3.40.50.300:FF:000003">
    <property type="entry name" value="Elongation factor Tu"/>
    <property type="match status" value="1"/>
</dbReference>
<dbReference type="Gene3D" id="3.40.50.300">
    <property type="entry name" value="P-loop containing nucleotide triphosphate hydrolases"/>
    <property type="match status" value="1"/>
</dbReference>
<dbReference type="Gene3D" id="2.40.30.10">
    <property type="entry name" value="Translation factors"/>
    <property type="match status" value="2"/>
</dbReference>
<dbReference type="HAMAP" id="MF_00118_B">
    <property type="entry name" value="EF_Tu_B"/>
    <property type="match status" value="1"/>
</dbReference>
<dbReference type="InterPro" id="IPR041709">
    <property type="entry name" value="EF-Tu_GTP-bd"/>
</dbReference>
<dbReference type="InterPro" id="IPR050055">
    <property type="entry name" value="EF-Tu_GTPase"/>
</dbReference>
<dbReference type="InterPro" id="IPR004161">
    <property type="entry name" value="EFTu-like_2"/>
</dbReference>
<dbReference type="InterPro" id="IPR033720">
    <property type="entry name" value="EFTU_2"/>
</dbReference>
<dbReference type="InterPro" id="IPR031157">
    <property type="entry name" value="G_TR_CS"/>
</dbReference>
<dbReference type="InterPro" id="IPR027417">
    <property type="entry name" value="P-loop_NTPase"/>
</dbReference>
<dbReference type="InterPro" id="IPR005225">
    <property type="entry name" value="Small_GTP-bd"/>
</dbReference>
<dbReference type="InterPro" id="IPR000795">
    <property type="entry name" value="T_Tr_GTP-bd_dom"/>
</dbReference>
<dbReference type="InterPro" id="IPR009000">
    <property type="entry name" value="Transl_B-barrel_sf"/>
</dbReference>
<dbReference type="InterPro" id="IPR009001">
    <property type="entry name" value="Transl_elong_EF1A/Init_IF2_C"/>
</dbReference>
<dbReference type="InterPro" id="IPR004541">
    <property type="entry name" value="Transl_elong_EFTu/EF1A_bac/org"/>
</dbReference>
<dbReference type="InterPro" id="IPR004160">
    <property type="entry name" value="Transl_elong_EFTu/EF1A_C"/>
</dbReference>
<dbReference type="NCBIfam" id="TIGR00485">
    <property type="entry name" value="EF-Tu"/>
    <property type="match status" value="1"/>
</dbReference>
<dbReference type="NCBIfam" id="NF000766">
    <property type="entry name" value="PRK00049.1"/>
    <property type="match status" value="1"/>
</dbReference>
<dbReference type="NCBIfam" id="NF009372">
    <property type="entry name" value="PRK12735.1"/>
    <property type="match status" value="1"/>
</dbReference>
<dbReference type="NCBIfam" id="NF009373">
    <property type="entry name" value="PRK12736.1"/>
    <property type="match status" value="1"/>
</dbReference>
<dbReference type="NCBIfam" id="TIGR00231">
    <property type="entry name" value="small_GTP"/>
    <property type="match status" value="1"/>
</dbReference>
<dbReference type="PANTHER" id="PTHR43721:SF22">
    <property type="entry name" value="ELONGATION FACTOR TU, MITOCHONDRIAL"/>
    <property type="match status" value="1"/>
</dbReference>
<dbReference type="PANTHER" id="PTHR43721">
    <property type="entry name" value="ELONGATION FACTOR TU-RELATED"/>
    <property type="match status" value="1"/>
</dbReference>
<dbReference type="Pfam" id="PF00009">
    <property type="entry name" value="GTP_EFTU"/>
    <property type="match status" value="1"/>
</dbReference>
<dbReference type="Pfam" id="PF03144">
    <property type="entry name" value="GTP_EFTU_D2"/>
    <property type="match status" value="1"/>
</dbReference>
<dbReference type="Pfam" id="PF03143">
    <property type="entry name" value="GTP_EFTU_D3"/>
    <property type="match status" value="1"/>
</dbReference>
<dbReference type="PRINTS" id="PR00315">
    <property type="entry name" value="ELONGATNFCT"/>
</dbReference>
<dbReference type="SUPFAM" id="SSF50465">
    <property type="entry name" value="EF-Tu/eEF-1alpha/eIF2-gamma C-terminal domain"/>
    <property type="match status" value="1"/>
</dbReference>
<dbReference type="SUPFAM" id="SSF52540">
    <property type="entry name" value="P-loop containing nucleoside triphosphate hydrolases"/>
    <property type="match status" value="1"/>
</dbReference>
<dbReference type="SUPFAM" id="SSF50447">
    <property type="entry name" value="Translation proteins"/>
    <property type="match status" value="1"/>
</dbReference>
<dbReference type="PROSITE" id="PS00301">
    <property type="entry name" value="G_TR_1"/>
    <property type="match status" value="1"/>
</dbReference>
<dbReference type="PROSITE" id="PS51722">
    <property type="entry name" value="G_TR_2"/>
    <property type="match status" value="1"/>
</dbReference>
<feature type="chain" id="PRO_0000337547" description="Elongation factor Tu">
    <location>
        <begin position="1"/>
        <end position="394"/>
    </location>
</feature>
<feature type="domain" description="tr-type G">
    <location>
        <begin position="10"/>
        <end position="204"/>
    </location>
</feature>
<feature type="region of interest" description="G1" evidence="1">
    <location>
        <begin position="19"/>
        <end position="26"/>
    </location>
</feature>
<feature type="region of interest" description="G2" evidence="1">
    <location>
        <begin position="60"/>
        <end position="64"/>
    </location>
</feature>
<feature type="region of interest" description="G3" evidence="1">
    <location>
        <begin position="81"/>
        <end position="84"/>
    </location>
</feature>
<feature type="region of interest" description="G4" evidence="1">
    <location>
        <begin position="136"/>
        <end position="139"/>
    </location>
</feature>
<feature type="region of interest" description="G5" evidence="1">
    <location>
        <begin position="174"/>
        <end position="176"/>
    </location>
</feature>
<feature type="binding site" evidence="2">
    <location>
        <begin position="19"/>
        <end position="26"/>
    </location>
    <ligand>
        <name>GTP</name>
        <dbReference type="ChEBI" id="CHEBI:37565"/>
    </ligand>
</feature>
<feature type="binding site" evidence="2">
    <location>
        <position position="26"/>
    </location>
    <ligand>
        <name>Mg(2+)</name>
        <dbReference type="ChEBI" id="CHEBI:18420"/>
    </ligand>
</feature>
<feature type="binding site" evidence="2">
    <location>
        <begin position="81"/>
        <end position="85"/>
    </location>
    <ligand>
        <name>GTP</name>
        <dbReference type="ChEBI" id="CHEBI:37565"/>
    </ligand>
</feature>
<feature type="binding site" evidence="2">
    <location>
        <begin position="136"/>
        <end position="139"/>
    </location>
    <ligand>
        <name>GTP</name>
        <dbReference type="ChEBI" id="CHEBI:37565"/>
    </ligand>
</feature>
<keyword id="KW-0963">Cytoplasm</keyword>
<keyword id="KW-0251">Elongation factor</keyword>
<keyword id="KW-0342">GTP-binding</keyword>
<keyword id="KW-0378">Hydrolase</keyword>
<keyword id="KW-0460">Magnesium</keyword>
<keyword id="KW-0479">Metal-binding</keyword>
<keyword id="KW-0547">Nucleotide-binding</keyword>
<keyword id="KW-0648">Protein biosynthesis</keyword>
<reference key="1">
    <citation type="journal article" date="2006" name="Genome Res.">
        <title>Massive genome erosion and functional adaptations provide insights into the symbiotic lifestyle of Sodalis glossinidius in the tsetse host.</title>
        <authorList>
            <person name="Toh H."/>
            <person name="Weiss B.L."/>
            <person name="Perkin S.A.H."/>
            <person name="Yamashita A."/>
            <person name="Oshima K."/>
            <person name="Hattori M."/>
            <person name="Aksoy S."/>
        </authorList>
    </citation>
    <scope>NUCLEOTIDE SEQUENCE [LARGE SCALE GENOMIC DNA]</scope>
    <source>
        <strain>morsitans</strain>
    </source>
</reference>
<name>EFTU_SODGM</name>
<comment type="function">
    <text evidence="2">GTP hydrolase that promotes the GTP-dependent binding of aminoacyl-tRNA to the A-site of ribosomes during protein biosynthesis.</text>
</comment>
<comment type="catalytic activity">
    <reaction evidence="2">
        <text>GTP + H2O = GDP + phosphate + H(+)</text>
        <dbReference type="Rhea" id="RHEA:19669"/>
        <dbReference type="ChEBI" id="CHEBI:15377"/>
        <dbReference type="ChEBI" id="CHEBI:15378"/>
        <dbReference type="ChEBI" id="CHEBI:37565"/>
        <dbReference type="ChEBI" id="CHEBI:43474"/>
        <dbReference type="ChEBI" id="CHEBI:58189"/>
        <dbReference type="EC" id="3.6.5.3"/>
    </reaction>
    <physiologicalReaction direction="left-to-right" evidence="2">
        <dbReference type="Rhea" id="RHEA:19670"/>
    </physiologicalReaction>
</comment>
<comment type="subunit">
    <text evidence="2">Monomer.</text>
</comment>
<comment type="subcellular location">
    <subcellularLocation>
        <location evidence="2">Cytoplasm</location>
    </subcellularLocation>
</comment>
<comment type="similarity">
    <text evidence="2">Belongs to the TRAFAC class translation factor GTPase superfamily. Classic translation factor GTPase family. EF-Tu/EF-1A subfamily.</text>
</comment>
<accession>Q2NQL7</accession>
<protein>
    <recommendedName>
        <fullName evidence="2">Elongation factor Tu</fullName>
        <shortName evidence="2">EF-Tu</shortName>
        <ecNumber evidence="2">3.6.5.3</ecNumber>
    </recommendedName>
</protein>
<proteinExistence type="inferred from homology"/>
<sequence length="394" mass="43106">MSKEKFQRTKPHVNVGTIGHVDHGKTTLTAAITTVLAKAYGGSARAFDQIDNAPEEKARGITINTSHVEYDTPTRHYAHVDCPGHADYVKNMITGAAQMDGAILVVAATDGPMPQTREHILLGRQVGVPYIIVFMNKCDMVDDEELLELVEMEVRELLSQYDFPGDDTPVIRGSALKALEGDEAWTAKIIELAEALDSYIPEPERAIDKPFLLPIEDVFSISGRGTVVTGRVERGIVKVGEEVEIVGIKDTTKTTCTGVEMFRKLLDEGRAGENVGVLLRGTKRDDVERGQVLAKPGSIKPHTQFESEVYILSKDEGGRHTPFFKGYRPQFYFRTTDVTGTIELPEGVEMVMPGDNIKMVVNLIAPIAMDDGLRFAIREGGRTVGAGVVAKVIA</sequence>
<evidence type="ECO:0000250" key="1"/>
<evidence type="ECO:0000255" key="2">
    <source>
        <dbReference type="HAMAP-Rule" id="MF_00118"/>
    </source>
</evidence>
<organism>
    <name type="scientific">Sodalis glossinidius (strain morsitans)</name>
    <dbReference type="NCBI Taxonomy" id="343509"/>
    <lineage>
        <taxon>Bacteria</taxon>
        <taxon>Pseudomonadati</taxon>
        <taxon>Pseudomonadota</taxon>
        <taxon>Gammaproteobacteria</taxon>
        <taxon>Enterobacterales</taxon>
        <taxon>Bruguierivoracaceae</taxon>
        <taxon>Sodalis</taxon>
    </lineage>
</organism>